<reference key="1">
    <citation type="journal article" date="2004" name="Proc. Natl. Acad. Sci. U.S.A.">
        <title>Structural flexibility in the Burkholderia mallei genome.</title>
        <authorList>
            <person name="Nierman W.C."/>
            <person name="DeShazer D."/>
            <person name="Kim H.S."/>
            <person name="Tettelin H."/>
            <person name="Nelson K.E."/>
            <person name="Feldblyum T.V."/>
            <person name="Ulrich R.L."/>
            <person name="Ronning C.M."/>
            <person name="Brinkac L.M."/>
            <person name="Daugherty S.C."/>
            <person name="Davidsen T.D."/>
            <person name="DeBoy R.T."/>
            <person name="Dimitrov G."/>
            <person name="Dodson R.J."/>
            <person name="Durkin A.S."/>
            <person name="Gwinn M.L."/>
            <person name="Haft D.H."/>
            <person name="Khouri H.M."/>
            <person name="Kolonay J.F."/>
            <person name="Madupu R."/>
            <person name="Mohammoud Y."/>
            <person name="Nelson W.C."/>
            <person name="Radune D."/>
            <person name="Romero C.M."/>
            <person name="Sarria S."/>
            <person name="Selengut J."/>
            <person name="Shamblin C."/>
            <person name="Sullivan S.A."/>
            <person name="White O."/>
            <person name="Yu Y."/>
            <person name="Zafar N."/>
            <person name="Zhou L."/>
            <person name="Fraser C.M."/>
        </authorList>
    </citation>
    <scope>NUCLEOTIDE SEQUENCE [LARGE SCALE GENOMIC DNA]</scope>
    <source>
        <strain>ATCC 23344</strain>
    </source>
</reference>
<feature type="chain" id="PRO_0000340433" description="Urease accessory protein UreD">
    <location>
        <begin position="1"/>
        <end position="291"/>
    </location>
</feature>
<accession>Q62HS3</accession>
<organism>
    <name type="scientific">Burkholderia mallei (strain ATCC 23344)</name>
    <dbReference type="NCBI Taxonomy" id="243160"/>
    <lineage>
        <taxon>Bacteria</taxon>
        <taxon>Pseudomonadati</taxon>
        <taxon>Pseudomonadota</taxon>
        <taxon>Betaproteobacteria</taxon>
        <taxon>Burkholderiales</taxon>
        <taxon>Burkholderiaceae</taxon>
        <taxon>Burkholderia</taxon>
        <taxon>pseudomallei group</taxon>
    </lineage>
</organism>
<sequence length="291" mass="30980">MSAHEPHTSLVRPAAKAWHARLELGFERQPGGRTALAHRRHVGPLRVQRALYPEGDAICHAVIVHPPGGVAGGDRLEIDVRLDAGTHAVLTTPGATKWYKSNGLDARQRIDIDVGAHAKLDWLPQNNLFFDAAHASLEFVLALGDGASVLGWDATQLGRQAAGEAWSAGSIASFSKIVGPSGRPLWVERARLDAGDPLRAAPQGLGGFAVYGTLWALGAACTEALAESIAPALPFDDALRAGVTCVAPGTLLIRALAHSMEALQRLLAEQWLALRPIVHGVDPKPLRLWQT</sequence>
<dbReference type="EMBL" id="CP000010">
    <property type="protein sequence ID" value="AAU50302.1"/>
    <property type="molecule type" value="Genomic_DNA"/>
</dbReference>
<dbReference type="RefSeq" id="WP_004185533.1">
    <property type="nucleotide sequence ID" value="NC_006348.1"/>
</dbReference>
<dbReference type="RefSeq" id="YP_103747.1">
    <property type="nucleotide sequence ID" value="NC_006348.1"/>
</dbReference>
<dbReference type="SMR" id="Q62HS3"/>
<dbReference type="KEGG" id="bma:BMA2181"/>
<dbReference type="PATRIC" id="fig|243160.12.peg.2250"/>
<dbReference type="eggNOG" id="COG0829">
    <property type="taxonomic scope" value="Bacteria"/>
</dbReference>
<dbReference type="HOGENOM" id="CLU_056339_0_0_4"/>
<dbReference type="Proteomes" id="UP000006693">
    <property type="component" value="Chromosome 1"/>
</dbReference>
<dbReference type="GO" id="GO:0005737">
    <property type="term" value="C:cytoplasm"/>
    <property type="evidence" value="ECO:0007669"/>
    <property type="project" value="UniProtKB-SubCell"/>
</dbReference>
<dbReference type="GO" id="GO:0016151">
    <property type="term" value="F:nickel cation binding"/>
    <property type="evidence" value="ECO:0007669"/>
    <property type="project" value="UniProtKB-UniRule"/>
</dbReference>
<dbReference type="HAMAP" id="MF_01384">
    <property type="entry name" value="UreD"/>
    <property type="match status" value="1"/>
</dbReference>
<dbReference type="InterPro" id="IPR002669">
    <property type="entry name" value="UreD"/>
</dbReference>
<dbReference type="PANTHER" id="PTHR33643">
    <property type="entry name" value="UREASE ACCESSORY PROTEIN D"/>
    <property type="match status" value="1"/>
</dbReference>
<dbReference type="PANTHER" id="PTHR33643:SF1">
    <property type="entry name" value="UREASE ACCESSORY PROTEIN D"/>
    <property type="match status" value="1"/>
</dbReference>
<dbReference type="Pfam" id="PF01774">
    <property type="entry name" value="UreD"/>
    <property type="match status" value="1"/>
</dbReference>
<proteinExistence type="inferred from homology"/>
<keyword id="KW-0143">Chaperone</keyword>
<keyword id="KW-0963">Cytoplasm</keyword>
<keyword id="KW-0996">Nickel insertion</keyword>
<keyword id="KW-1185">Reference proteome</keyword>
<protein>
    <recommendedName>
        <fullName evidence="1">Urease accessory protein UreD</fullName>
    </recommendedName>
</protein>
<evidence type="ECO:0000255" key="1">
    <source>
        <dbReference type="HAMAP-Rule" id="MF_01384"/>
    </source>
</evidence>
<name>URED_BURMA</name>
<comment type="function">
    <text evidence="1">Required for maturation of urease via the functional incorporation of the urease nickel metallocenter.</text>
</comment>
<comment type="subunit">
    <text evidence="1">UreD, UreF and UreG form a complex that acts as a GTP-hydrolysis-dependent molecular chaperone, activating the urease apoprotein by helping to assemble the nickel containing metallocenter of UreC. The UreE protein probably delivers the nickel.</text>
</comment>
<comment type="subcellular location">
    <subcellularLocation>
        <location evidence="1">Cytoplasm</location>
    </subcellularLocation>
</comment>
<comment type="similarity">
    <text evidence="1">Belongs to the UreD family.</text>
</comment>
<gene>
    <name evidence="1" type="primary">ureD</name>
    <name type="ordered locus">BMA2181</name>
</gene>